<accession>P9WI89</accession>
<accession>L0TG21</accession>
<accession>O06374</accession>
<accession>P67772</accession>
<keyword id="KW-1185">Reference proteome</keyword>
<sequence length="291" mass="32447">MTQSSSVERLVGEIDEFGYTVVEDVLDADSVAAYLADTRRLERELPTVIANSTTVVKGLARPGHVPVDRVDHDWVRIDNLLLHGTRYEALPVHPKLLPVIEGVLGRDCLLSWCMTSNQLPGAVAQRLHCDDEMYPLPRPHQPLLCNALIALCDFTADNGATQVVPGSHRWPERPSPPYPEGKPVEINAGDALIWNGSLWHTAAANRTDAPRPALTINFCVGFVRQQVNQQLSIPRELVRCFEPRLQELIGYGLYAGKMGRIDWRPPADYLDADRHPFLDAVADRLQTSVRL</sequence>
<protein>
    <recommendedName>
        <fullName>Uncharacterized protein Rv3633</fullName>
    </recommendedName>
</protein>
<name>Y3633_MYCTU</name>
<proteinExistence type="evidence at protein level"/>
<feature type="chain" id="PRO_0000215236" description="Uncharacterized protein Rv3633">
    <location>
        <begin position="1"/>
        <end position="291"/>
    </location>
</feature>
<gene>
    <name type="ordered locus">Rv3633</name>
    <name type="ORF">MTCY15C10.19c</name>
</gene>
<dbReference type="EMBL" id="AL123456">
    <property type="protein sequence ID" value="CCP46456.1"/>
    <property type="molecule type" value="Genomic_DNA"/>
</dbReference>
<dbReference type="PIR" id="B70562">
    <property type="entry name" value="B70562"/>
</dbReference>
<dbReference type="RefSeq" id="NP_218150.1">
    <property type="nucleotide sequence ID" value="NC_000962.3"/>
</dbReference>
<dbReference type="RefSeq" id="WP_003419601.1">
    <property type="nucleotide sequence ID" value="NZ_NVQJ01000045.1"/>
</dbReference>
<dbReference type="SMR" id="P9WI89"/>
<dbReference type="FunCoup" id="P9WI89">
    <property type="interactions" value="52"/>
</dbReference>
<dbReference type="STRING" id="83332.Rv3633"/>
<dbReference type="PaxDb" id="83332-Rv3633"/>
<dbReference type="DNASU" id="885252"/>
<dbReference type="GeneID" id="885252"/>
<dbReference type="KEGG" id="mtu:Rv3633"/>
<dbReference type="KEGG" id="mtv:RVBD_3633"/>
<dbReference type="TubercuList" id="Rv3633"/>
<dbReference type="eggNOG" id="COG5285">
    <property type="taxonomic scope" value="Bacteria"/>
</dbReference>
<dbReference type="InParanoid" id="P9WI89"/>
<dbReference type="OrthoDB" id="9796766at2"/>
<dbReference type="PhylomeDB" id="P9WI89"/>
<dbReference type="Proteomes" id="UP000001584">
    <property type="component" value="Chromosome"/>
</dbReference>
<dbReference type="GO" id="GO:0005886">
    <property type="term" value="C:plasma membrane"/>
    <property type="evidence" value="ECO:0007005"/>
    <property type="project" value="MTBBASE"/>
</dbReference>
<dbReference type="GO" id="GO:0016706">
    <property type="term" value="F:2-oxoglutarate-dependent dioxygenase activity"/>
    <property type="evidence" value="ECO:0007669"/>
    <property type="project" value="UniProtKB-ARBA"/>
</dbReference>
<dbReference type="GO" id="GO:0005506">
    <property type="term" value="F:iron ion binding"/>
    <property type="evidence" value="ECO:0007669"/>
    <property type="project" value="UniProtKB-ARBA"/>
</dbReference>
<dbReference type="FunFam" id="2.60.120.620:FF:000028">
    <property type="entry name" value="Phytanoyl-CoA dioxygenase"/>
    <property type="match status" value="1"/>
</dbReference>
<dbReference type="Gene3D" id="2.60.120.620">
    <property type="entry name" value="q2cbj1_9rhob like domain"/>
    <property type="match status" value="1"/>
</dbReference>
<dbReference type="InterPro" id="IPR008775">
    <property type="entry name" value="Phytyl_CoA_dOase-like"/>
</dbReference>
<dbReference type="PANTHER" id="PTHR20883:SF48">
    <property type="entry name" value="ECTOINE DIOXYGENASE"/>
    <property type="match status" value="1"/>
</dbReference>
<dbReference type="PANTHER" id="PTHR20883">
    <property type="entry name" value="PHYTANOYL-COA DIOXYGENASE DOMAIN CONTAINING 1"/>
    <property type="match status" value="1"/>
</dbReference>
<dbReference type="Pfam" id="PF05721">
    <property type="entry name" value="PhyH"/>
    <property type="match status" value="1"/>
</dbReference>
<dbReference type="SUPFAM" id="SSF51197">
    <property type="entry name" value="Clavaminate synthase-like"/>
    <property type="match status" value="1"/>
</dbReference>
<organism>
    <name type="scientific">Mycobacterium tuberculosis (strain ATCC 25618 / H37Rv)</name>
    <dbReference type="NCBI Taxonomy" id="83332"/>
    <lineage>
        <taxon>Bacteria</taxon>
        <taxon>Bacillati</taxon>
        <taxon>Actinomycetota</taxon>
        <taxon>Actinomycetes</taxon>
        <taxon>Mycobacteriales</taxon>
        <taxon>Mycobacteriaceae</taxon>
        <taxon>Mycobacterium</taxon>
        <taxon>Mycobacterium tuberculosis complex</taxon>
    </lineage>
</organism>
<evidence type="ECO:0000305" key="1"/>
<reference key="1">
    <citation type="journal article" date="1998" name="Nature">
        <title>Deciphering the biology of Mycobacterium tuberculosis from the complete genome sequence.</title>
        <authorList>
            <person name="Cole S.T."/>
            <person name="Brosch R."/>
            <person name="Parkhill J."/>
            <person name="Garnier T."/>
            <person name="Churcher C.M."/>
            <person name="Harris D.E."/>
            <person name="Gordon S.V."/>
            <person name="Eiglmeier K."/>
            <person name="Gas S."/>
            <person name="Barry C.E. III"/>
            <person name="Tekaia F."/>
            <person name="Badcock K."/>
            <person name="Basham D."/>
            <person name="Brown D."/>
            <person name="Chillingworth T."/>
            <person name="Connor R."/>
            <person name="Davies R.M."/>
            <person name="Devlin K."/>
            <person name="Feltwell T."/>
            <person name="Gentles S."/>
            <person name="Hamlin N."/>
            <person name="Holroyd S."/>
            <person name="Hornsby T."/>
            <person name="Jagels K."/>
            <person name="Krogh A."/>
            <person name="McLean J."/>
            <person name="Moule S."/>
            <person name="Murphy L.D."/>
            <person name="Oliver S."/>
            <person name="Osborne J."/>
            <person name="Quail M.A."/>
            <person name="Rajandream M.A."/>
            <person name="Rogers J."/>
            <person name="Rutter S."/>
            <person name="Seeger K."/>
            <person name="Skelton S."/>
            <person name="Squares S."/>
            <person name="Squares R."/>
            <person name="Sulston J.E."/>
            <person name="Taylor K."/>
            <person name="Whitehead S."/>
            <person name="Barrell B.G."/>
        </authorList>
    </citation>
    <scope>NUCLEOTIDE SEQUENCE [LARGE SCALE GENOMIC DNA]</scope>
    <source>
        <strain>ATCC 25618 / H37Rv</strain>
    </source>
</reference>
<reference key="2">
    <citation type="journal article" date="2011" name="Mol. Cell. Proteomics">
        <title>Proteogenomic analysis of Mycobacterium tuberculosis by high resolution mass spectrometry.</title>
        <authorList>
            <person name="Kelkar D.S."/>
            <person name="Kumar D."/>
            <person name="Kumar P."/>
            <person name="Balakrishnan L."/>
            <person name="Muthusamy B."/>
            <person name="Yadav A.K."/>
            <person name="Shrivastava P."/>
            <person name="Marimuthu A."/>
            <person name="Anand S."/>
            <person name="Sundaram H."/>
            <person name="Kingsbury R."/>
            <person name="Harsha H.C."/>
            <person name="Nair B."/>
            <person name="Prasad T.S."/>
            <person name="Chauhan D.S."/>
            <person name="Katoch K."/>
            <person name="Katoch V.M."/>
            <person name="Kumar P."/>
            <person name="Chaerkady R."/>
            <person name="Ramachandran S."/>
            <person name="Dash D."/>
            <person name="Pandey A."/>
        </authorList>
    </citation>
    <scope>IDENTIFICATION BY MASS SPECTROMETRY [LARGE SCALE ANALYSIS]</scope>
    <source>
        <strain>ATCC 25618 / H37Rv</strain>
    </source>
</reference>
<comment type="similarity">
    <text evidence="1">Belongs to the PhyH family.</text>
</comment>